<proteinExistence type="inferred from homology"/>
<organism>
    <name type="scientific">Bacillus thuringiensis subsp. konkukian (strain 97-27)</name>
    <dbReference type="NCBI Taxonomy" id="281309"/>
    <lineage>
        <taxon>Bacteria</taxon>
        <taxon>Bacillati</taxon>
        <taxon>Bacillota</taxon>
        <taxon>Bacilli</taxon>
        <taxon>Bacillales</taxon>
        <taxon>Bacillaceae</taxon>
        <taxon>Bacillus</taxon>
        <taxon>Bacillus cereus group</taxon>
    </lineage>
</organism>
<sequence>MNKQKFYTNLSKEVSYALRHAQWKYELELDENGWVSVEQLLHALHQSIEWRDVKIEDLKIMIEKSEKKRHELKENKIRALYGHSIPMKIVKEEGVPPEFLYHGTSPRFLNSIESNGLSPMSRQYVHLSEDIITAELVGKRKDKHPIILEVNTGKAREEGVKFYLGNEKVWLADEIPSEFIAINKN</sequence>
<reference key="1">
    <citation type="journal article" date="2006" name="J. Bacteriol.">
        <title>Pathogenomic sequence analysis of Bacillus cereus and Bacillus thuringiensis isolates closely related to Bacillus anthracis.</title>
        <authorList>
            <person name="Han C.S."/>
            <person name="Xie G."/>
            <person name="Challacombe J.F."/>
            <person name="Altherr M.R."/>
            <person name="Bhotika S.S."/>
            <person name="Bruce D."/>
            <person name="Campbell C.S."/>
            <person name="Campbell M.L."/>
            <person name="Chen J."/>
            <person name="Chertkov O."/>
            <person name="Cleland C."/>
            <person name="Dimitrijevic M."/>
            <person name="Doggett N.A."/>
            <person name="Fawcett J.J."/>
            <person name="Glavina T."/>
            <person name="Goodwin L.A."/>
            <person name="Hill K.K."/>
            <person name="Hitchcock P."/>
            <person name="Jackson P.J."/>
            <person name="Keim P."/>
            <person name="Kewalramani A.R."/>
            <person name="Longmire J."/>
            <person name="Lucas S."/>
            <person name="Malfatti S."/>
            <person name="McMurry K."/>
            <person name="Meincke L.J."/>
            <person name="Misra M."/>
            <person name="Moseman B.L."/>
            <person name="Mundt M."/>
            <person name="Munk A.C."/>
            <person name="Okinaka R.T."/>
            <person name="Parson-Quintana B."/>
            <person name="Reilly L.P."/>
            <person name="Richardson P."/>
            <person name="Robinson D.L."/>
            <person name="Rubin E."/>
            <person name="Saunders E."/>
            <person name="Tapia R."/>
            <person name="Tesmer J.G."/>
            <person name="Thayer N."/>
            <person name="Thompson L.S."/>
            <person name="Tice H."/>
            <person name="Ticknor L.O."/>
            <person name="Wills P.L."/>
            <person name="Brettin T.S."/>
            <person name="Gilna P."/>
        </authorList>
    </citation>
    <scope>NUCLEOTIDE SEQUENCE [LARGE SCALE GENOMIC DNA]</scope>
    <source>
        <strain>97-27</strain>
    </source>
</reference>
<keyword id="KW-0520">NAD</keyword>
<keyword id="KW-0808">Transferase</keyword>
<dbReference type="EC" id="2.7.1.-" evidence="1"/>
<dbReference type="EMBL" id="AE017355">
    <property type="protein sequence ID" value="AAT60143.1"/>
    <property type="molecule type" value="Genomic_DNA"/>
</dbReference>
<dbReference type="RefSeq" id="WP_001041381.1">
    <property type="nucleotide sequence ID" value="NC_005957.1"/>
</dbReference>
<dbReference type="RefSeq" id="YP_037101.1">
    <property type="nucleotide sequence ID" value="NC_005957.1"/>
</dbReference>
<dbReference type="SMR" id="Q6HH75"/>
<dbReference type="KEGG" id="btk:BT9727_2777"/>
<dbReference type="PATRIC" id="fig|281309.8.peg.2948"/>
<dbReference type="HOGENOM" id="CLU_052998_4_1_9"/>
<dbReference type="Proteomes" id="UP000001301">
    <property type="component" value="Chromosome"/>
</dbReference>
<dbReference type="GO" id="GO:0003950">
    <property type="term" value="F:NAD+ poly-ADP-ribosyltransferase activity"/>
    <property type="evidence" value="ECO:0007669"/>
    <property type="project" value="InterPro"/>
</dbReference>
<dbReference type="GO" id="GO:0000215">
    <property type="term" value="F:tRNA 2'-phosphotransferase activity"/>
    <property type="evidence" value="ECO:0007669"/>
    <property type="project" value="TreeGrafter"/>
</dbReference>
<dbReference type="GO" id="GO:0006388">
    <property type="term" value="P:tRNA splicing, via endonucleolytic cleavage and ligation"/>
    <property type="evidence" value="ECO:0007669"/>
    <property type="project" value="UniProtKB-UniRule"/>
</dbReference>
<dbReference type="Gene3D" id="3.20.170.30">
    <property type="match status" value="1"/>
</dbReference>
<dbReference type="Gene3D" id="1.10.10.970">
    <property type="entry name" value="RNA 2'-phosphotransferase, Tpt1/KptA family, N-terminal domain"/>
    <property type="match status" value="1"/>
</dbReference>
<dbReference type="HAMAP" id="MF_00299">
    <property type="entry name" value="KptA"/>
    <property type="match status" value="1"/>
</dbReference>
<dbReference type="InterPro" id="IPR002745">
    <property type="entry name" value="Ptrans_KptA/Tpt1"/>
</dbReference>
<dbReference type="InterPro" id="IPR042081">
    <property type="entry name" value="RNA_2'-PTrans_C"/>
</dbReference>
<dbReference type="InterPro" id="IPR022928">
    <property type="entry name" value="RNA_2'-PTrans_KptA"/>
</dbReference>
<dbReference type="InterPro" id="IPR042080">
    <property type="entry name" value="RNA_2'-PTrans_N"/>
</dbReference>
<dbReference type="PANTHER" id="PTHR12684">
    <property type="entry name" value="PUTATIVE PHOSPHOTRANSFERASE"/>
    <property type="match status" value="1"/>
</dbReference>
<dbReference type="PANTHER" id="PTHR12684:SF2">
    <property type="entry name" value="TRNA 2'-PHOSPHOTRANSFERASE 1"/>
    <property type="match status" value="1"/>
</dbReference>
<dbReference type="Pfam" id="PF01885">
    <property type="entry name" value="PTS_2-RNA"/>
    <property type="match status" value="1"/>
</dbReference>
<dbReference type="SUPFAM" id="SSF56399">
    <property type="entry name" value="ADP-ribosylation"/>
    <property type="match status" value="1"/>
</dbReference>
<comment type="function">
    <text evidence="1">Removes the 2'-phosphate from RNA via an intermediate in which the phosphate is ADP-ribosylated by NAD followed by a presumed transesterification to release the RNA and generate ADP-ribose 1''-2''-cyclic phosphate (APPR&gt;P). May function as an ADP-ribosylase.</text>
</comment>
<comment type="similarity">
    <text evidence="1">Belongs to the KptA/TPT1 family.</text>
</comment>
<accession>Q6HH75</accession>
<evidence type="ECO:0000255" key="1">
    <source>
        <dbReference type="HAMAP-Rule" id="MF_00299"/>
    </source>
</evidence>
<feature type="chain" id="PRO_0000231950" description="Probable RNA 2'-phosphotransferase">
    <location>
        <begin position="1"/>
        <end position="185"/>
    </location>
</feature>
<name>KPTA_BACHK</name>
<gene>
    <name evidence="1" type="primary">kptA</name>
    <name type="ordered locus">BT9727_2777</name>
</gene>
<protein>
    <recommendedName>
        <fullName evidence="1">Probable RNA 2'-phosphotransferase</fullName>
        <ecNumber evidence="1">2.7.1.-</ecNumber>
    </recommendedName>
</protein>